<proteinExistence type="inferred from homology"/>
<accession>I6RU37</accession>
<sequence length="76" mass="8453">MAYIYALIFAIVVCMNTDVIQAEESQHDTLENVEYRLSCIPKGGECERMADPCCPGLQCLGGNPFNKENFGKCKCQ</sequence>
<dbReference type="EMBL" id="JQ757061">
    <property type="protein sequence ID" value="AFM55008.1"/>
    <property type="molecule type" value="mRNA"/>
</dbReference>
<dbReference type="SMR" id="I6RU37"/>
<dbReference type="GO" id="GO:0005576">
    <property type="term" value="C:extracellular region"/>
    <property type="evidence" value="ECO:0007669"/>
    <property type="project" value="UniProtKB-SubCell"/>
</dbReference>
<dbReference type="GO" id="GO:0005246">
    <property type="term" value="F:calcium channel regulator activity"/>
    <property type="evidence" value="ECO:0007669"/>
    <property type="project" value="UniProtKB-KW"/>
</dbReference>
<dbReference type="GO" id="GO:0090729">
    <property type="term" value="F:toxin activity"/>
    <property type="evidence" value="ECO:0007669"/>
    <property type="project" value="UniProtKB-KW"/>
</dbReference>
<keyword id="KW-0108">Calcium channel impairing toxin</keyword>
<keyword id="KW-1015">Disulfide bond</keyword>
<keyword id="KW-0872">Ion channel impairing toxin</keyword>
<keyword id="KW-0528">Neurotoxin</keyword>
<keyword id="KW-0964">Secreted</keyword>
<keyword id="KW-0732">Signal</keyword>
<keyword id="KW-0800">Toxin</keyword>
<keyword id="KW-1218">Voltage-gated calcium channel impairing toxin</keyword>
<feature type="signal peptide" evidence="2">
    <location>
        <begin position="1"/>
        <end position="22"/>
    </location>
</feature>
<feature type="chain" id="PRO_0000425467" description="Omega-scoloptoxin(13)-Ssm2b" evidence="1">
    <location>
        <begin position="23"/>
        <end position="76"/>
    </location>
</feature>
<evidence type="ECO:0000250" key="1">
    <source>
        <dbReference type="UniProtKB" id="I6S390"/>
    </source>
</evidence>
<evidence type="ECO:0000255" key="2"/>
<evidence type="ECO:0000303" key="3">
    <source>
    </source>
</evidence>
<evidence type="ECO:0000305" key="4"/>
<evidence type="ECO:0000305" key="5">
    <source>
    </source>
</evidence>
<comment type="function">
    <text evidence="1">Inhibits voltage-gated calcium channel (Cav) currents.</text>
</comment>
<comment type="subcellular location">
    <subcellularLocation>
        <location evidence="5">Secreted</location>
    </subcellularLocation>
</comment>
<comment type="tissue specificity">
    <text evidence="5">Expressed by the venom gland.</text>
</comment>
<comment type="PTM">
    <text evidence="4">Contains 3 disulfide bonds.</text>
</comment>
<comment type="similarity">
    <text evidence="4">Belongs to the scoloptoxin-13 family.</text>
</comment>
<name>TXD2B_SCOMU</name>
<organism>
    <name type="scientific">Scolopendra mutilans</name>
    <name type="common">Chinese red-headed centipede</name>
    <name type="synonym">Scolopendra subspinipes mutilans</name>
    <dbReference type="NCBI Taxonomy" id="2836329"/>
    <lineage>
        <taxon>Eukaryota</taxon>
        <taxon>Metazoa</taxon>
        <taxon>Ecdysozoa</taxon>
        <taxon>Arthropoda</taxon>
        <taxon>Myriapoda</taxon>
        <taxon>Chilopoda</taxon>
        <taxon>Pleurostigmophora</taxon>
        <taxon>Scolopendromorpha</taxon>
        <taxon>Scolopendridae</taxon>
        <taxon>Scolopendra</taxon>
    </lineage>
</organism>
<reference key="1">
    <citation type="journal article" date="2012" name="Mol. Cell. Proteomics">
        <title>Chemical punch packed in venoms makes centipedes excellent predators.</title>
        <authorList>
            <person name="Yang S."/>
            <person name="Liu Z."/>
            <person name="Xiao Y."/>
            <person name="Li Y."/>
            <person name="Rong M."/>
            <person name="Liang S."/>
            <person name="Zhang Z."/>
            <person name="Yu H."/>
            <person name="King G.F."/>
            <person name="Lai R."/>
        </authorList>
    </citation>
    <scope>NUCLEOTIDE SEQUENCE [MRNA]</scope>
    <source>
        <tissue>Venom gland</tissue>
    </source>
</reference>
<protein>
    <recommendedName>
        <fullName evidence="1">Omega-scoloptoxin(13)-Ssm2b</fullName>
        <shortName evidence="1">Omega-SLPTX(13)-Ssm2b</shortName>
    </recommendedName>
    <alternativeName>
        <fullName evidence="3">Omega-scoloptoxin-Ssm2b</fullName>
        <shortName evidence="3">Omega-SLPTX-Ssm2b</shortName>
    </alternativeName>
</protein>